<feature type="chain" id="PRO_1000165335" description="Small ribosomal subunit protein uS8">
    <location>
        <begin position="1"/>
        <end position="130"/>
    </location>
</feature>
<gene>
    <name evidence="1" type="primary">rps8</name>
    <name type="ordered locus">Hlac_2434</name>
</gene>
<organism>
    <name type="scientific">Halorubrum lacusprofundi (strain ATCC 49239 / DSM 5036 / JCM 8891 / ACAM 34)</name>
    <dbReference type="NCBI Taxonomy" id="416348"/>
    <lineage>
        <taxon>Archaea</taxon>
        <taxon>Methanobacteriati</taxon>
        <taxon>Methanobacteriota</taxon>
        <taxon>Stenosarchaea group</taxon>
        <taxon>Halobacteria</taxon>
        <taxon>Halobacteriales</taxon>
        <taxon>Haloferacaceae</taxon>
        <taxon>Halorubrum</taxon>
    </lineage>
</organism>
<protein>
    <recommendedName>
        <fullName evidence="1">Small ribosomal subunit protein uS8</fullName>
    </recommendedName>
    <alternativeName>
        <fullName evidence="2">30S ribosomal protein S8</fullName>
    </alternativeName>
</protein>
<comment type="function">
    <text evidence="1">One of the primary rRNA binding proteins, it binds directly to 16S rRNA central domain where it helps coordinate assembly of the platform of the 30S subunit.</text>
</comment>
<comment type="subunit">
    <text evidence="1">Part of the 30S ribosomal subunit.</text>
</comment>
<comment type="similarity">
    <text evidence="1">Belongs to the universal ribosomal protein uS8 family.</text>
</comment>
<keyword id="KW-1185">Reference proteome</keyword>
<keyword id="KW-0687">Ribonucleoprotein</keyword>
<keyword id="KW-0689">Ribosomal protein</keyword>
<keyword id="KW-0694">RNA-binding</keyword>
<keyword id="KW-0699">rRNA-binding</keyword>
<accession>B9LSR2</accession>
<dbReference type="EMBL" id="CP001365">
    <property type="protein sequence ID" value="ACM58009.1"/>
    <property type="molecule type" value="Genomic_DNA"/>
</dbReference>
<dbReference type="RefSeq" id="WP_004047215.1">
    <property type="nucleotide sequence ID" value="NC_012029.1"/>
</dbReference>
<dbReference type="SMR" id="B9LSR2"/>
<dbReference type="GeneID" id="7400552"/>
<dbReference type="KEGG" id="hla:Hlac_2434"/>
<dbReference type="eggNOG" id="arCOG04091">
    <property type="taxonomic scope" value="Archaea"/>
</dbReference>
<dbReference type="HOGENOM" id="CLU_098428_1_1_2"/>
<dbReference type="Proteomes" id="UP000000740">
    <property type="component" value="Chromosome 1"/>
</dbReference>
<dbReference type="GO" id="GO:1990904">
    <property type="term" value="C:ribonucleoprotein complex"/>
    <property type="evidence" value="ECO:0007669"/>
    <property type="project" value="UniProtKB-KW"/>
</dbReference>
<dbReference type="GO" id="GO:0005840">
    <property type="term" value="C:ribosome"/>
    <property type="evidence" value="ECO:0007669"/>
    <property type="project" value="UniProtKB-KW"/>
</dbReference>
<dbReference type="GO" id="GO:0019843">
    <property type="term" value="F:rRNA binding"/>
    <property type="evidence" value="ECO:0007669"/>
    <property type="project" value="UniProtKB-UniRule"/>
</dbReference>
<dbReference type="GO" id="GO:0003735">
    <property type="term" value="F:structural constituent of ribosome"/>
    <property type="evidence" value="ECO:0007669"/>
    <property type="project" value="InterPro"/>
</dbReference>
<dbReference type="GO" id="GO:0006412">
    <property type="term" value="P:translation"/>
    <property type="evidence" value="ECO:0007669"/>
    <property type="project" value="UniProtKB-UniRule"/>
</dbReference>
<dbReference type="FunFam" id="3.30.1490.10:FF:000002">
    <property type="entry name" value="40S ribosomal protein S15a"/>
    <property type="match status" value="1"/>
</dbReference>
<dbReference type="Gene3D" id="3.30.1370.30">
    <property type="match status" value="1"/>
</dbReference>
<dbReference type="Gene3D" id="3.30.1490.10">
    <property type="match status" value="1"/>
</dbReference>
<dbReference type="HAMAP" id="MF_01302_A">
    <property type="entry name" value="Ribosomal_uS8_A"/>
    <property type="match status" value="1"/>
</dbReference>
<dbReference type="InterPro" id="IPR000630">
    <property type="entry name" value="Ribosomal_uS8"/>
</dbReference>
<dbReference type="InterPro" id="IPR047863">
    <property type="entry name" value="Ribosomal_uS8_CS"/>
</dbReference>
<dbReference type="InterPro" id="IPR035987">
    <property type="entry name" value="Ribosomal_uS8_sf"/>
</dbReference>
<dbReference type="NCBIfam" id="NF003115">
    <property type="entry name" value="PRK04034.1"/>
    <property type="match status" value="1"/>
</dbReference>
<dbReference type="PANTHER" id="PTHR11758">
    <property type="entry name" value="40S RIBOSOMAL PROTEIN S15A"/>
    <property type="match status" value="1"/>
</dbReference>
<dbReference type="Pfam" id="PF00410">
    <property type="entry name" value="Ribosomal_S8"/>
    <property type="match status" value="1"/>
</dbReference>
<dbReference type="SUPFAM" id="SSF56047">
    <property type="entry name" value="Ribosomal protein S8"/>
    <property type="match status" value="1"/>
</dbReference>
<dbReference type="PROSITE" id="PS00053">
    <property type="entry name" value="RIBOSOMAL_S8"/>
    <property type="match status" value="1"/>
</dbReference>
<proteinExistence type="inferred from homology"/>
<sequence>MTGNDPFTNALAGMDNAESVGHLSYTVEPASNIIGSVLEVLYDRGYVDGFEYVDDGKAGKFEVELKGAINECGAVKPRYSAGADEFEKWEKRYLPARDYGTLIVTTSHGVMSHYEAREEGIGGQVIAYVY</sequence>
<evidence type="ECO:0000255" key="1">
    <source>
        <dbReference type="HAMAP-Rule" id="MF_01302"/>
    </source>
</evidence>
<evidence type="ECO:0000305" key="2"/>
<name>RS8_HALLT</name>
<reference key="1">
    <citation type="journal article" date="2016" name="Stand. Genomic Sci.">
        <title>Complete genome sequence of the Antarctic Halorubrum lacusprofundi type strain ACAM 34.</title>
        <authorList>
            <person name="Anderson I.J."/>
            <person name="DasSarma P."/>
            <person name="Lucas S."/>
            <person name="Copeland A."/>
            <person name="Lapidus A."/>
            <person name="Del Rio T.G."/>
            <person name="Tice H."/>
            <person name="Dalin E."/>
            <person name="Bruce D.C."/>
            <person name="Goodwin L."/>
            <person name="Pitluck S."/>
            <person name="Sims D."/>
            <person name="Brettin T.S."/>
            <person name="Detter J.C."/>
            <person name="Han C.S."/>
            <person name="Larimer F."/>
            <person name="Hauser L."/>
            <person name="Land M."/>
            <person name="Ivanova N."/>
            <person name="Richardson P."/>
            <person name="Cavicchioli R."/>
            <person name="DasSarma S."/>
            <person name="Woese C.R."/>
            <person name="Kyrpides N.C."/>
        </authorList>
    </citation>
    <scope>NUCLEOTIDE SEQUENCE [LARGE SCALE GENOMIC DNA]</scope>
    <source>
        <strain>ATCC 49239 / DSM 5036 / JCM 8891 / ACAM 34</strain>
    </source>
</reference>